<feature type="signal peptide" evidence="2">
    <location>
        <begin position="1"/>
        <end position="24"/>
    </location>
</feature>
<feature type="chain" id="PRO_0000349279" description="Serine protease 42">
    <location>
        <begin position="25"/>
        <end position="335"/>
    </location>
</feature>
<feature type="domain" description="Peptidase S1" evidence="3">
    <location>
        <begin position="79"/>
        <end position="315"/>
    </location>
</feature>
<feature type="active site" description="Charge relay system" evidence="1">
    <location>
        <position position="119"/>
    </location>
</feature>
<feature type="active site" description="Charge relay system" evidence="1">
    <location>
        <position position="165"/>
    </location>
</feature>
<feature type="active site" description="Charge relay system" evidence="1">
    <location>
        <position position="267"/>
    </location>
</feature>
<feature type="glycosylation site" description="N-linked (GlcNAc...) asparagine" evidence="2">
    <location>
        <position position="67"/>
    </location>
</feature>
<feature type="glycosylation site" description="N-linked (GlcNAc...) asparagine" evidence="2">
    <location>
        <position position="140"/>
    </location>
</feature>
<feature type="glycosylation site" description="N-linked (GlcNAc...) asparagine" evidence="2">
    <location>
        <position position="176"/>
    </location>
</feature>
<feature type="disulfide bond" evidence="3">
    <location>
        <begin position="104"/>
        <end position="120"/>
    </location>
</feature>
<feature type="disulfide bond" evidence="3">
    <location>
        <begin position="199"/>
        <end position="273"/>
    </location>
</feature>
<feature type="disulfide bond" evidence="3">
    <location>
        <begin position="232"/>
        <end position="253"/>
    </location>
</feature>
<feature type="disulfide bond" evidence="3">
    <location>
        <begin position="263"/>
        <end position="291"/>
    </location>
</feature>
<protein>
    <recommendedName>
        <fullName evidence="6">Serine protease 42</fullName>
        <ecNumber>3.4.21.-</ecNumber>
    </recommendedName>
    <alternativeName>
        <fullName>Testis serine protease 2</fullName>
    </alternativeName>
</protein>
<evidence type="ECO:0000250" key="1"/>
<evidence type="ECO:0000255" key="2"/>
<evidence type="ECO:0000255" key="3">
    <source>
        <dbReference type="PROSITE-ProRule" id="PRU00274"/>
    </source>
</evidence>
<evidence type="ECO:0000269" key="4">
    <source>
    </source>
</evidence>
<evidence type="ECO:0000303" key="5">
    <source>
    </source>
</evidence>
<evidence type="ECO:0000305" key="6"/>
<evidence type="ECO:0000312" key="7">
    <source>
        <dbReference type="MGI" id="MGI:2665280"/>
    </source>
</evidence>
<sequence length="335" mass="36683">MASGGGSLGLIVFLLLLQPKPCEAWAAASVLSTSGFPSGFSEAPRDNPPPPTRVRMSKATTRSPFMNFSLVCGQPFMKIMGGVDAEEGKWPWQVSVRVRHMHVCGGSLINSQWVLTAAHCIYSRIQYNVKVGDRSVYRQNTSLVIPIKTIFVHPKFSTTIVVKNDIALLKLQHPVNFTTNIYPVCIPSESFPVKAGTKCWVTGWGKLVPGAPDVPTEILQEVDQNVILYEECNEMLKKATSSSVDLVKRGMVCGYKERGKDACQGDSGGPMSCEFENKWVQVGVVSWGISCGRKGYPGVYTDVAFYSKWLIAVVNQADCLHPVVFLVLLLCSLTS</sequence>
<name>PRS42_MOUSE</name>
<organism>
    <name type="scientific">Mus musculus</name>
    <name type="common">Mouse</name>
    <dbReference type="NCBI Taxonomy" id="10090"/>
    <lineage>
        <taxon>Eukaryota</taxon>
        <taxon>Metazoa</taxon>
        <taxon>Chordata</taxon>
        <taxon>Craniata</taxon>
        <taxon>Vertebrata</taxon>
        <taxon>Euteleostomi</taxon>
        <taxon>Mammalia</taxon>
        <taxon>Eutheria</taxon>
        <taxon>Euarchontoglires</taxon>
        <taxon>Glires</taxon>
        <taxon>Rodentia</taxon>
        <taxon>Myomorpha</taxon>
        <taxon>Muroidea</taxon>
        <taxon>Muridae</taxon>
        <taxon>Murinae</taxon>
        <taxon>Mus</taxon>
        <taxon>Mus</taxon>
    </lineage>
</organism>
<comment type="function">
    <text evidence="4">Plays a role in spermatogenesis. Involved in germ cell survival during meiosis. Lacks protease activity in vitro.</text>
</comment>
<comment type="subcellular location">
    <subcellularLocation>
        <location evidence="4">Cytoplasm</location>
    </subcellularLocation>
    <subcellularLocation>
        <location evidence="4">Cell membrane</location>
        <topology evidence="4">Lipid-anchor</topology>
        <topology evidence="4">GPI-anchor</topology>
    </subcellularLocation>
</comment>
<comment type="tissue specificity">
    <text evidence="4">Testis-specific (PubMed:23536369). Mainly detected in round spermatids at all the eminiferous epithelial stages (at protein level) (PubMed:23536369).</text>
</comment>
<comment type="developmental stage">
    <text evidence="4">In testis, expressed at all stages from the late pachytene primary spermatocyte to the secondary spermatocyte. Not detected at day 7 after birth. Expression is detected at day 14 and increases dramatically at day 21 and reach a peak at day 28 to remain high until day 56.</text>
</comment>
<comment type="similarity">
    <text evidence="3">Belongs to the peptidase S1 family.</text>
</comment>
<comment type="caution">
    <text evidence="4">Lacks protease activity in vitro.</text>
</comment>
<gene>
    <name evidence="7" type="primary">Prss42</name>
    <name evidence="5" type="synonym">Tessp2</name>
</gene>
<keyword id="KW-1003">Cell membrane</keyword>
<keyword id="KW-0963">Cytoplasm</keyword>
<keyword id="KW-0221">Differentiation</keyword>
<keyword id="KW-1015">Disulfide bond</keyword>
<keyword id="KW-0325">Glycoprotein</keyword>
<keyword id="KW-0336">GPI-anchor</keyword>
<keyword id="KW-0378">Hydrolase</keyword>
<keyword id="KW-0449">Lipoprotein</keyword>
<keyword id="KW-0472">Membrane</keyword>
<keyword id="KW-0645">Protease</keyword>
<keyword id="KW-1185">Reference proteome</keyword>
<keyword id="KW-0720">Serine protease</keyword>
<keyword id="KW-0732">Signal</keyword>
<keyword id="KW-0744">Spermatogenesis</keyword>
<accession>Q8VIF2</accession>
<dbReference type="EC" id="3.4.21.-"/>
<dbReference type="EMBL" id="AB052292">
    <property type="protein sequence ID" value="BAB78735.1"/>
    <property type="molecule type" value="mRNA"/>
</dbReference>
<dbReference type="EMBL" id="BC060984">
    <property type="protein sequence ID" value="AAH60984.1"/>
    <property type="molecule type" value="mRNA"/>
</dbReference>
<dbReference type="CCDS" id="CCDS23572.1"/>
<dbReference type="RefSeq" id="NP_694739.1">
    <property type="nucleotide sequence ID" value="NM_153099.1"/>
</dbReference>
<dbReference type="SMR" id="Q8VIF2"/>
<dbReference type="FunCoup" id="Q8VIF2">
    <property type="interactions" value="110"/>
</dbReference>
<dbReference type="STRING" id="10090.ENSMUSP00000041088"/>
<dbReference type="MEROPS" id="S01.317"/>
<dbReference type="GlyCosmos" id="Q8VIF2">
    <property type="glycosylation" value="3 sites, No reported glycans"/>
</dbReference>
<dbReference type="GlyGen" id="Q8VIF2">
    <property type="glycosylation" value="3 sites"/>
</dbReference>
<dbReference type="PhosphoSitePlus" id="Q8VIF2"/>
<dbReference type="SwissPalm" id="Q8VIF2"/>
<dbReference type="PaxDb" id="10090-ENSMUSP00000041088"/>
<dbReference type="ProteomicsDB" id="291677"/>
<dbReference type="DNASU" id="235628"/>
<dbReference type="Ensembl" id="ENSMUST00000035715.8">
    <property type="protein sequence ID" value="ENSMUSP00000041088.7"/>
    <property type="gene ID" value="ENSMUSG00000044664.8"/>
</dbReference>
<dbReference type="GeneID" id="235628"/>
<dbReference type="KEGG" id="mmu:235628"/>
<dbReference type="UCSC" id="uc009rus.1">
    <property type="organism name" value="mouse"/>
</dbReference>
<dbReference type="AGR" id="MGI:2665280"/>
<dbReference type="CTD" id="235628"/>
<dbReference type="MGI" id="MGI:2665280">
    <property type="gene designation" value="Prss42"/>
</dbReference>
<dbReference type="VEuPathDB" id="HostDB:ENSMUSG00000044664"/>
<dbReference type="eggNOG" id="KOG3627">
    <property type="taxonomic scope" value="Eukaryota"/>
</dbReference>
<dbReference type="GeneTree" id="ENSGT00940000163134"/>
<dbReference type="HOGENOM" id="CLU_006842_0_4_1"/>
<dbReference type="InParanoid" id="Q8VIF2"/>
<dbReference type="OMA" id="CEYNDTW"/>
<dbReference type="OrthoDB" id="10002959at2759"/>
<dbReference type="PhylomeDB" id="Q8VIF2"/>
<dbReference type="TreeFam" id="TF351676"/>
<dbReference type="BioGRID-ORCS" id="235628">
    <property type="hits" value="1 hit in 77 CRISPR screens"/>
</dbReference>
<dbReference type="ChiTaRS" id="Prss42">
    <property type="organism name" value="mouse"/>
</dbReference>
<dbReference type="PRO" id="PR:Q8VIF2"/>
<dbReference type="Proteomes" id="UP000000589">
    <property type="component" value="Chromosome 9"/>
</dbReference>
<dbReference type="RNAct" id="Q8VIF2">
    <property type="molecule type" value="protein"/>
</dbReference>
<dbReference type="Bgee" id="ENSMUSG00000044664">
    <property type="expression patterns" value="Expressed in spermatocyte and 8 other cell types or tissues"/>
</dbReference>
<dbReference type="GO" id="GO:0005737">
    <property type="term" value="C:cytoplasm"/>
    <property type="evidence" value="ECO:0000314"/>
    <property type="project" value="MGI"/>
</dbReference>
<dbReference type="GO" id="GO:0005886">
    <property type="term" value="C:plasma membrane"/>
    <property type="evidence" value="ECO:0000314"/>
    <property type="project" value="MGI"/>
</dbReference>
<dbReference type="GO" id="GO:0098552">
    <property type="term" value="C:side of membrane"/>
    <property type="evidence" value="ECO:0007669"/>
    <property type="project" value="UniProtKB-KW"/>
</dbReference>
<dbReference type="GO" id="GO:0004252">
    <property type="term" value="F:serine-type endopeptidase activity"/>
    <property type="evidence" value="ECO:0007669"/>
    <property type="project" value="InterPro"/>
</dbReference>
<dbReference type="GO" id="GO:0007281">
    <property type="term" value="P:germ cell development"/>
    <property type="evidence" value="ECO:0000314"/>
    <property type="project" value="MGI"/>
</dbReference>
<dbReference type="GO" id="GO:0006508">
    <property type="term" value="P:proteolysis"/>
    <property type="evidence" value="ECO:0007669"/>
    <property type="project" value="UniProtKB-KW"/>
</dbReference>
<dbReference type="GO" id="GO:0007283">
    <property type="term" value="P:spermatogenesis"/>
    <property type="evidence" value="ECO:0000314"/>
    <property type="project" value="MGI"/>
</dbReference>
<dbReference type="CDD" id="cd00190">
    <property type="entry name" value="Tryp_SPc"/>
    <property type="match status" value="1"/>
</dbReference>
<dbReference type="FunFam" id="2.40.10.10:FF:000006">
    <property type="entry name" value="Serine proteinase stubble"/>
    <property type="match status" value="1"/>
</dbReference>
<dbReference type="Gene3D" id="2.40.10.10">
    <property type="entry name" value="Trypsin-like serine proteases"/>
    <property type="match status" value="2"/>
</dbReference>
<dbReference type="InterPro" id="IPR009003">
    <property type="entry name" value="Peptidase_S1_PA"/>
</dbReference>
<dbReference type="InterPro" id="IPR043504">
    <property type="entry name" value="Peptidase_S1_PA_chymotrypsin"/>
</dbReference>
<dbReference type="InterPro" id="IPR001314">
    <property type="entry name" value="Peptidase_S1A"/>
</dbReference>
<dbReference type="InterPro" id="IPR001254">
    <property type="entry name" value="Trypsin_dom"/>
</dbReference>
<dbReference type="InterPro" id="IPR018114">
    <property type="entry name" value="TRYPSIN_HIS"/>
</dbReference>
<dbReference type="InterPro" id="IPR033116">
    <property type="entry name" value="TRYPSIN_SER"/>
</dbReference>
<dbReference type="PANTHER" id="PTHR24253:SF159">
    <property type="entry name" value="SERINE PROTEASE 42"/>
    <property type="match status" value="1"/>
</dbReference>
<dbReference type="PANTHER" id="PTHR24253">
    <property type="entry name" value="TRANSMEMBRANE PROTEASE SERINE"/>
    <property type="match status" value="1"/>
</dbReference>
<dbReference type="Pfam" id="PF00089">
    <property type="entry name" value="Trypsin"/>
    <property type="match status" value="1"/>
</dbReference>
<dbReference type="PRINTS" id="PR00722">
    <property type="entry name" value="CHYMOTRYPSIN"/>
</dbReference>
<dbReference type="SMART" id="SM00020">
    <property type="entry name" value="Tryp_SPc"/>
    <property type="match status" value="1"/>
</dbReference>
<dbReference type="SUPFAM" id="SSF50494">
    <property type="entry name" value="Trypsin-like serine proteases"/>
    <property type="match status" value="1"/>
</dbReference>
<dbReference type="PROSITE" id="PS50240">
    <property type="entry name" value="TRYPSIN_DOM"/>
    <property type="match status" value="1"/>
</dbReference>
<dbReference type="PROSITE" id="PS00134">
    <property type="entry name" value="TRYPSIN_HIS"/>
    <property type="match status" value="1"/>
</dbReference>
<dbReference type="PROSITE" id="PS00135">
    <property type="entry name" value="TRYPSIN_SER"/>
    <property type="match status" value="1"/>
</dbReference>
<proteinExistence type="evidence at protein level"/>
<reference key="1">
    <citation type="journal article" date="2013" name="Biol. Reprod.">
        <title>Three testis-specific paralogous serine proteases play different roles in murine spermatogenesis and are involved in germ cell survival during meiosis.</title>
        <authorList>
            <person name="Yoneda R."/>
            <person name="Takahashi T."/>
            <person name="Matsui H."/>
            <person name="Takano N."/>
            <person name="Hasebe Y."/>
            <person name="Ogiwara K."/>
            <person name="Kimura A.P."/>
        </authorList>
    </citation>
    <scope>NUCLEOTIDE SEQUENCE [MRNA]</scope>
    <scope>TISSUE SPECIFICITY</scope>
    <scope>SUBCELLULAR LOCATION</scope>
    <scope>FUNCTION</scope>
    <scope>DEVELOPMENTAL STAGE</scope>
    <scope>TOPOLOGY</scope>
    <scope>CAUTION</scope>
</reference>
<reference key="2">
    <citation type="journal article" date="2004" name="Genome Res.">
        <title>The status, quality, and expansion of the NIH full-length cDNA project: the Mammalian Gene Collection (MGC).</title>
        <authorList>
            <consortium name="The MGC Project Team"/>
        </authorList>
    </citation>
    <scope>NUCLEOTIDE SEQUENCE [LARGE SCALE MRNA]</scope>
    <source>
        <tissue>Testis</tissue>
    </source>
</reference>